<sequence length="219" mass="23653">MSALHSIPHRSKKLPPLRVGVGGPVGSGKTTLVEMLCKSMRERWDLVVVTNDIYTKEDQRLLTVSGALEPERIMGVETGGCPHTAIREDASINLEAVDRMLAKFPNADIVFIESGGDNLAATFSPELSDLTIYVIDVAAGEKIPRKGGPGITKSDLFVINKTDLAPHVGADLAVMEADTQRMRPAHASSRPYVMTNLKTRAGLAEVVSFIERRGLLHAA</sequence>
<accession>A2SDI6</accession>
<keyword id="KW-0143">Chaperone</keyword>
<keyword id="KW-0963">Cytoplasm</keyword>
<keyword id="KW-0342">GTP-binding</keyword>
<keyword id="KW-0996">Nickel insertion</keyword>
<keyword id="KW-0547">Nucleotide-binding</keyword>
<keyword id="KW-1185">Reference proteome</keyword>
<reference key="1">
    <citation type="journal article" date="2007" name="J. Bacteriol.">
        <title>Whole-genome analysis of the methyl tert-butyl ether-degrading beta-proteobacterium Methylibium petroleiphilum PM1.</title>
        <authorList>
            <person name="Kane S.R."/>
            <person name="Chakicherla A.Y."/>
            <person name="Chain P.S.G."/>
            <person name="Schmidt R."/>
            <person name="Shin M.W."/>
            <person name="Legler T.C."/>
            <person name="Scow K.M."/>
            <person name="Larimer F.W."/>
            <person name="Lucas S.M."/>
            <person name="Richardson P.M."/>
            <person name="Hristova K.R."/>
        </authorList>
    </citation>
    <scope>NUCLEOTIDE SEQUENCE [LARGE SCALE GENOMIC DNA]</scope>
    <source>
        <strain>ATCC BAA-1232 / LMG 22953 / PM1</strain>
    </source>
</reference>
<protein>
    <recommendedName>
        <fullName evidence="1">Urease accessory protein UreG</fullName>
    </recommendedName>
</protein>
<name>UREG_METPP</name>
<evidence type="ECO:0000255" key="1">
    <source>
        <dbReference type="HAMAP-Rule" id="MF_01389"/>
    </source>
</evidence>
<evidence type="ECO:0000256" key="2">
    <source>
        <dbReference type="SAM" id="MobiDB-lite"/>
    </source>
</evidence>
<proteinExistence type="inferred from homology"/>
<dbReference type="EMBL" id="CP000555">
    <property type="protein sequence ID" value="ABM93625.1"/>
    <property type="molecule type" value="Genomic_DNA"/>
</dbReference>
<dbReference type="RefSeq" id="WP_011828263.1">
    <property type="nucleotide sequence ID" value="NC_008825.1"/>
</dbReference>
<dbReference type="SMR" id="A2SDI6"/>
<dbReference type="STRING" id="420662.Mpe_A0663"/>
<dbReference type="KEGG" id="mpt:Mpe_A0663"/>
<dbReference type="eggNOG" id="COG0378">
    <property type="taxonomic scope" value="Bacteria"/>
</dbReference>
<dbReference type="HOGENOM" id="CLU_072144_1_0_4"/>
<dbReference type="Proteomes" id="UP000000366">
    <property type="component" value="Chromosome"/>
</dbReference>
<dbReference type="GO" id="GO:0005737">
    <property type="term" value="C:cytoplasm"/>
    <property type="evidence" value="ECO:0007669"/>
    <property type="project" value="UniProtKB-SubCell"/>
</dbReference>
<dbReference type="GO" id="GO:0005525">
    <property type="term" value="F:GTP binding"/>
    <property type="evidence" value="ECO:0007669"/>
    <property type="project" value="UniProtKB-KW"/>
</dbReference>
<dbReference type="GO" id="GO:0003924">
    <property type="term" value="F:GTPase activity"/>
    <property type="evidence" value="ECO:0007669"/>
    <property type="project" value="InterPro"/>
</dbReference>
<dbReference type="GO" id="GO:0016151">
    <property type="term" value="F:nickel cation binding"/>
    <property type="evidence" value="ECO:0007669"/>
    <property type="project" value="UniProtKB-UniRule"/>
</dbReference>
<dbReference type="GO" id="GO:0043419">
    <property type="term" value="P:urea catabolic process"/>
    <property type="evidence" value="ECO:0007669"/>
    <property type="project" value="InterPro"/>
</dbReference>
<dbReference type="CDD" id="cd05540">
    <property type="entry name" value="UreG"/>
    <property type="match status" value="1"/>
</dbReference>
<dbReference type="FunFam" id="3.40.50.300:FF:000208">
    <property type="entry name" value="Urease accessory protein UreG"/>
    <property type="match status" value="1"/>
</dbReference>
<dbReference type="Gene3D" id="3.40.50.300">
    <property type="entry name" value="P-loop containing nucleotide triphosphate hydrolases"/>
    <property type="match status" value="1"/>
</dbReference>
<dbReference type="HAMAP" id="MF_01389">
    <property type="entry name" value="UreG"/>
    <property type="match status" value="1"/>
</dbReference>
<dbReference type="InterPro" id="IPR003495">
    <property type="entry name" value="CobW/HypB/UreG_nucleotide-bd"/>
</dbReference>
<dbReference type="InterPro" id="IPR027417">
    <property type="entry name" value="P-loop_NTPase"/>
</dbReference>
<dbReference type="InterPro" id="IPR004400">
    <property type="entry name" value="UreG"/>
</dbReference>
<dbReference type="NCBIfam" id="TIGR00101">
    <property type="entry name" value="ureG"/>
    <property type="match status" value="1"/>
</dbReference>
<dbReference type="PANTHER" id="PTHR31715">
    <property type="entry name" value="UREASE ACCESSORY PROTEIN G"/>
    <property type="match status" value="1"/>
</dbReference>
<dbReference type="PANTHER" id="PTHR31715:SF0">
    <property type="entry name" value="UREASE ACCESSORY PROTEIN G"/>
    <property type="match status" value="1"/>
</dbReference>
<dbReference type="Pfam" id="PF02492">
    <property type="entry name" value="cobW"/>
    <property type="match status" value="1"/>
</dbReference>
<dbReference type="PIRSF" id="PIRSF005624">
    <property type="entry name" value="Ni-bind_GTPase"/>
    <property type="match status" value="1"/>
</dbReference>
<dbReference type="SUPFAM" id="SSF52540">
    <property type="entry name" value="P-loop containing nucleoside triphosphate hydrolases"/>
    <property type="match status" value="1"/>
</dbReference>
<feature type="chain" id="PRO_0000347400" description="Urease accessory protein UreG">
    <location>
        <begin position="1"/>
        <end position="219"/>
    </location>
</feature>
<feature type="region of interest" description="Disordered" evidence="2">
    <location>
        <begin position="1"/>
        <end position="20"/>
    </location>
</feature>
<feature type="binding site" evidence="1">
    <location>
        <begin position="23"/>
        <end position="30"/>
    </location>
    <ligand>
        <name>GTP</name>
        <dbReference type="ChEBI" id="CHEBI:37565"/>
    </ligand>
</feature>
<gene>
    <name evidence="1" type="primary">ureG</name>
    <name type="ordered locus">Mpe_A0663</name>
</gene>
<organism>
    <name type="scientific">Methylibium petroleiphilum (strain ATCC BAA-1232 / LMG 22953 / PM1)</name>
    <dbReference type="NCBI Taxonomy" id="420662"/>
    <lineage>
        <taxon>Bacteria</taxon>
        <taxon>Pseudomonadati</taxon>
        <taxon>Pseudomonadota</taxon>
        <taxon>Betaproteobacteria</taxon>
        <taxon>Burkholderiales</taxon>
        <taxon>Sphaerotilaceae</taxon>
        <taxon>Methylibium</taxon>
    </lineage>
</organism>
<comment type="function">
    <text evidence="1">Facilitates the functional incorporation of the urease nickel metallocenter. This process requires GTP hydrolysis, probably effectuated by UreG.</text>
</comment>
<comment type="subunit">
    <text evidence="1">Homodimer. UreD, UreF and UreG form a complex that acts as a GTP-hydrolysis-dependent molecular chaperone, activating the urease apoprotein by helping to assemble the nickel containing metallocenter of UreC. The UreE protein probably delivers the nickel.</text>
</comment>
<comment type="subcellular location">
    <subcellularLocation>
        <location evidence="1">Cytoplasm</location>
    </subcellularLocation>
</comment>
<comment type="similarity">
    <text evidence="1">Belongs to the SIMIBI class G3E GTPase family. UreG subfamily.</text>
</comment>